<accession>O64250</accession>
<gene>
    <name type="primary">59</name>
</gene>
<proteinExistence type="predicted"/>
<feature type="chain" id="PRO_0000164792" description="Gene 59 protein">
    <location>
        <begin position="1"/>
        <end position="165"/>
    </location>
</feature>
<reference key="1">
    <citation type="journal article" date="1998" name="J. Mol. Biol.">
        <title>Genome structure of mycobacteriophage D29: implications for phage evolution.</title>
        <authorList>
            <person name="Ford M.E."/>
            <person name="Sarkis G.J."/>
            <person name="Belanger A.E."/>
            <person name="Hendrix R.W."/>
            <person name="Hatfull G.F."/>
        </authorList>
    </citation>
    <scope>NUCLEOTIDE SEQUENCE [LARGE SCALE GENOMIC DNA]</scope>
</reference>
<reference key="2">
    <citation type="submission" date="2021-06" db="EMBL/GenBank/DDBJ databases">
        <authorList>
            <person name="Ford M.E."/>
            <person name="Sarkis G.J."/>
            <person name="Belanger A.E."/>
            <person name="Hendrix R.W."/>
            <person name="Hatfull G.F."/>
        </authorList>
    </citation>
    <scope>SEQUENCE REVISION TO N-TERMINUS</scope>
</reference>
<organismHost>
    <name type="scientific">Mycobacterium</name>
    <dbReference type="NCBI Taxonomy" id="1763"/>
</organismHost>
<dbReference type="EMBL" id="AF022214">
    <property type="protein sequence ID" value="AAC18500.2"/>
    <property type="molecule type" value="Genomic_DNA"/>
</dbReference>
<dbReference type="PIR" id="A72807">
    <property type="entry name" value="A72807"/>
</dbReference>
<dbReference type="RefSeq" id="NP_046875.1">
    <property type="nucleotide sequence ID" value="NC_001900.1"/>
</dbReference>
<dbReference type="SMR" id="O64250"/>
<dbReference type="GeneID" id="1261615"/>
<dbReference type="KEGG" id="vg:1261615"/>
<dbReference type="OrthoDB" id="27676at10239"/>
<dbReference type="Proteomes" id="UP000002131">
    <property type="component" value="Segment"/>
</dbReference>
<dbReference type="Gene3D" id="3.40.1800.10">
    <property type="entry name" value="His-Me finger endonucleases"/>
    <property type="match status" value="1"/>
</dbReference>
<dbReference type="InterPro" id="IPR004211">
    <property type="entry name" value="Endonuclease_7"/>
</dbReference>
<dbReference type="InterPro" id="IPR038563">
    <property type="entry name" value="Endonuclease_7_sf"/>
</dbReference>
<dbReference type="InterPro" id="IPR044925">
    <property type="entry name" value="His-Me_finger_sf"/>
</dbReference>
<dbReference type="Pfam" id="PF02945">
    <property type="entry name" value="Endonuclease_7"/>
    <property type="match status" value="1"/>
</dbReference>
<dbReference type="SUPFAM" id="SSF54060">
    <property type="entry name" value="His-Me finger endonucleases"/>
    <property type="match status" value="1"/>
</dbReference>
<name>VG59_BPMD2</name>
<keyword id="KW-1185">Reference proteome</keyword>
<protein>
    <recommendedName>
        <fullName>Gene 59 protein</fullName>
    </recommendedName>
    <alternativeName>
        <fullName>Gp59</fullName>
    </alternativeName>
</protein>
<sequence length="165" mass="18965">MGRAAKRTPGYRVQNRKHKRKPCKDCVAQGLPLTRDAKYPGPRCATHHREFKAARSSTSWETRILATYGITAEEYWAIYEFQGGRCYICQRANGKRKRLSVDHDHKTGIVRGLLCTMCNKYILGWARDCIEMLQRAIDYLRKPPAVQVIGERIAPIEADKLRSQT</sequence>
<organism>
    <name type="scientific">Mycobacterium phage D29</name>
    <name type="common">Mycobacteriophage D29</name>
    <dbReference type="NCBI Taxonomy" id="28369"/>
    <lineage>
        <taxon>Viruses</taxon>
        <taxon>Duplodnaviria</taxon>
        <taxon>Heunggongvirae</taxon>
        <taxon>Uroviricota</taxon>
        <taxon>Caudoviricetes</taxon>
        <taxon>Fromanvirus</taxon>
    </lineage>
</organism>